<protein>
    <recommendedName>
        <fullName evidence="1">UPF0473 protein Exig_2070</fullName>
    </recommendedName>
</protein>
<proteinExistence type="inferred from homology"/>
<organism>
    <name type="scientific">Exiguobacterium sibiricum (strain DSM 17290 / CCUG 55495 / CIP 109462 / JCM 13490 / 255-15)</name>
    <dbReference type="NCBI Taxonomy" id="262543"/>
    <lineage>
        <taxon>Bacteria</taxon>
        <taxon>Bacillati</taxon>
        <taxon>Bacillota</taxon>
        <taxon>Bacilli</taxon>
        <taxon>Bacillales</taxon>
        <taxon>Bacillales Family XII. Incertae Sedis</taxon>
        <taxon>Exiguobacterium</taxon>
    </lineage>
</organism>
<feature type="chain" id="PRO_1000200976" description="UPF0473 protein Exig_2070">
    <location>
        <begin position="1"/>
        <end position="97"/>
    </location>
</feature>
<accession>B1YJE1</accession>
<comment type="similarity">
    <text evidence="1">Belongs to the UPF0473 family.</text>
</comment>
<dbReference type="EMBL" id="CP001022">
    <property type="protein sequence ID" value="ACB61522.1"/>
    <property type="molecule type" value="Genomic_DNA"/>
</dbReference>
<dbReference type="RefSeq" id="WP_012370939.1">
    <property type="nucleotide sequence ID" value="NC_010556.1"/>
</dbReference>
<dbReference type="STRING" id="262543.Exig_2070"/>
<dbReference type="KEGG" id="esi:Exig_2070"/>
<dbReference type="eggNOG" id="COG3906">
    <property type="taxonomic scope" value="Bacteria"/>
</dbReference>
<dbReference type="HOGENOM" id="CLU_2342586_0_0_9"/>
<dbReference type="OrthoDB" id="2086132at2"/>
<dbReference type="Proteomes" id="UP000001681">
    <property type="component" value="Chromosome"/>
</dbReference>
<dbReference type="HAMAP" id="MF_01448">
    <property type="entry name" value="UPF0473"/>
    <property type="match status" value="1"/>
</dbReference>
<dbReference type="InterPro" id="IPR009711">
    <property type="entry name" value="UPF0473"/>
</dbReference>
<dbReference type="Pfam" id="PF06949">
    <property type="entry name" value="DUF1292"/>
    <property type="match status" value="1"/>
</dbReference>
<reference key="1">
    <citation type="submission" date="2008-04" db="EMBL/GenBank/DDBJ databases">
        <title>Complete sequence of chromosome of Exiguobacterium sibiricum 255-15.</title>
        <authorList>
            <consortium name="US DOE Joint Genome Institute"/>
            <person name="Copeland A."/>
            <person name="Lucas S."/>
            <person name="Lapidus A."/>
            <person name="Glavina del Rio T."/>
            <person name="Dalin E."/>
            <person name="Tice H."/>
            <person name="Bruce D."/>
            <person name="Goodwin L."/>
            <person name="Pitluck S."/>
            <person name="Kiss H."/>
            <person name="Chertkov O."/>
            <person name="Monk C."/>
            <person name="Brettin T."/>
            <person name="Detter J.C."/>
            <person name="Han C."/>
            <person name="Kuske C.R."/>
            <person name="Schmutz J."/>
            <person name="Larimer F."/>
            <person name="Land M."/>
            <person name="Hauser L."/>
            <person name="Kyrpides N."/>
            <person name="Mikhailova N."/>
            <person name="Vishnivetskaya T."/>
            <person name="Rodrigues D.F."/>
            <person name="Gilichinsky D."/>
            <person name="Tiedje J."/>
            <person name="Richardson P."/>
        </authorList>
    </citation>
    <scope>NUCLEOTIDE SEQUENCE [LARGE SCALE GENOMIC DNA]</scope>
    <source>
        <strain>DSM 17290 / CCUG 55495 / CIP 109462 / JCM 13490 / 255-15</strain>
    </source>
</reference>
<keyword id="KW-1185">Reference proteome</keyword>
<sequence>MQQNEPTHYVIPDGEGNEFKFAERLRYESPRSSKTYIFLEPVGADYDEAEEVDIFVYELEEYGEGDDDFNLVPIAEDDAETWDEIEEVFNTLEDELD</sequence>
<name>Y2070_EXIS2</name>
<gene>
    <name type="ordered locus">Exig_2070</name>
</gene>
<evidence type="ECO:0000255" key="1">
    <source>
        <dbReference type="HAMAP-Rule" id="MF_01448"/>
    </source>
</evidence>